<proteinExistence type="inferred from homology"/>
<dbReference type="EMBL" id="AE017354">
    <property type="protein sequence ID" value="AAU26438.1"/>
    <property type="molecule type" value="Genomic_DNA"/>
</dbReference>
<dbReference type="RefSeq" id="YP_094385.2">
    <property type="nucleotide sequence ID" value="NC_002942.5"/>
</dbReference>
<dbReference type="SMR" id="Q5ZYN1"/>
<dbReference type="STRING" id="272624.lpg0341"/>
<dbReference type="PaxDb" id="272624-lpg0341"/>
<dbReference type="KEGG" id="lpn:lpg0341"/>
<dbReference type="eggNOG" id="COG0094">
    <property type="taxonomic scope" value="Bacteria"/>
</dbReference>
<dbReference type="HOGENOM" id="CLU_061015_2_1_6"/>
<dbReference type="OrthoDB" id="9806626at2"/>
<dbReference type="Proteomes" id="UP000000609">
    <property type="component" value="Chromosome"/>
</dbReference>
<dbReference type="GO" id="GO:1990904">
    <property type="term" value="C:ribonucleoprotein complex"/>
    <property type="evidence" value="ECO:0007669"/>
    <property type="project" value="UniProtKB-KW"/>
</dbReference>
<dbReference type="GO" id="GO:0005840">
    <property type="term" value="C:ribosome"/>
    <property type="evidence" value="ECO:0007669"/>
    <property type="project" value="UniProtKB-KW"/>
</dbReference>
<dbReference type="GO" id="GO:0019843">
    <property type="term" value="F:rRNA binding"/>
    <property type="evidence" value="ECO:0007669"/>
    <property type="project" value="UniProtKB-UniRule"/>
</dbReference>
<dbReference type="GO" id="GO:0003735">
    <property type="term" value="F:structural constituent of ribosome"/>
    <property type="evidence" value="ECO:0007669"/>
    <property type="project" value="InterPro"/>
</dbReference>
<dbReference type="GO" id="GO:0000049">
    <property type="term" value="F:tRNA binding"/>
    <property type="evidence" value="ECO:0007669"/>
    <property type="project" value="UniProtKB-UniRule"/>
</dbReference>
<dbReference type="GO" id="GO:0006412">
    <property type="term" value="P:translation"/>
    <property type="evidence" value="ECO:0007669"/>
    <property type="project" value="UniProtKB-UniRule"/>
</dbReference>
<dbReference type="FunFam" id="3.30.1440.10:FF:000001">
    <property type="entry name" value="50S ribosomal protein L5"/>
    <property type="match status" value="1"/>
</dbReference>
<dbReference type="Gene3D" id="3.30.1440.10">
    <property type="match status" value="1"/>
</dbReference>
<dbReference type="HAMAP" id="MF_01333_B">
    <property type="entry name" value="Ribosomal_uL5_B"/>
    <property type="match status" value="1"/>
</dbReference>
<dbReference type="InterPro" id="IPR002132">
    <property type="entry name" value="Ribosomal_uL5"/>
</dbReference>
<dbReference type="InterPro" id="IPR020930">
    <property type="entry name" value="Ribosomal_uL5_bac-type"/>
</dbReference>
<dbReference type="InterPro" id="IPR031309">
    <property type="entry name" value="Ribosomal_uL5_C"/>
</dbReference>
<dbReference type="InterPro" id="IPR020929">
    <property type="entry name" value="Ribosomal_uL5_CS"/>
</dbReference>
<dbReference type="InterPro" id="IPR022803">
    <property type="entry name" value="Ribosomal_uL5_dom_sf"/>
</dbReference>
<dbReference type="InterPro" id="IPR031310">
    <property type="entry name" value="Ribosomal_uL5_N"/>
</dbReference>
<dbReference type="NCBIfam" id="NF000585">
    <property type="entry name" value="PRK00010.1"/>
    <property type="match status" value="1"/>
</dbReference>
<dbReference type="PANTHER" id="PTHR11994">
    <property type="entry name" value="60S RIBOSOMAL PROTEIN L11-RELATED"/>
    <property type="match status" value="1"/>
</dbReference>
<dbReference type="Pfam" id="PF00281">
    <property type="entry name" value="Ribosomal_L5"/>
    <property type="match status" value="1"/>
</dbReference>
<dbReference type="Pfam" id="PF00673">
    <property type="entry name" value="Ribosomal_L5_C"/>
    <property type="match status" value="1"/>
</dbReference>
<dbReference type="PIRSF" id="PIRSF002161">
    <property type="entry name" value="Ribosomal_L5"/>
    <property type="match status" value="1"/>
</dbReference>
<dbReference type="SUPFAM" id="SSF55282">
    <property type="entry name" value="RL5-like"/>
    <property type="match status" value="1"/>
</dbReference>
<dbReference type="PROSITE" id="PS00358">
    <property type="entry name" value="RIBOSOMAL_L5"/>
    <property type="match status" value="1"/>
</dbReference>
<name>RL5_LEGPH</name>
<accession>Q5ZYN1</accession>
<protein>
    <recommendedName>
        <fullName evidence="1">Large ribosomal subunit protein uL5</fullName>
    </recommendedName>
    <alternativeName>
        <fullName evidence="2">50S ribosomal protein L5</fullName>
    </alternativeName>
</protein>
<comment type="function">
    <text evidence="1">This is one of the proteins that bind and probably mediate the attachment of the 5S RNA into the large ribosomal subunit, where it forms part of the central protuberance. In the 70S ribosome it contacts protein S13 of the 30S subunit (bridge B1b), connecting the 2 subunits; this bridge is implicated in subunit movement. Contacts the P site tRNA; the 5S rRNA and some of its associated proteins might help stabilize positioning of ribosome-bound tRNAs.</text>
</comment>
<comment type="subunit">
    <text evidence="1">Part of the 50S ribosomal subunit; part of the 5S rRNA/L5/L18/L25 subcomplex. Contacts the 5S rRNA and the P site tRNA. Forms a bridge to the 30S subunit in the 70S ribosome.</text>
</comment>
<comment type="similarity">
    <text evidence="1">Belongs to the universal ribosomal protein uL5 family.</text>
</comment>
<evidence type="ECO:0000255" key="1">
    <source>
        <dbReference type="HAMAP-Rule" id="MF_01333"/>
    </source>
</evidence>
<evidence type="ECO:0000305" key="2"/>
<keyword id="KW-1185">Reference proteome</keyword>
<keyword id="KW-0687">Ribonucleoprotein</keyword>
<keyword id="KW-0689">Ribosomal protein</keyword>
<keyword id="KW-0694">RNA-binding</keyword>
<keyword id="KW-0699">rRNA-binding</keyword>
<keyword id="KW-0820">tRNA-binding</keyword>
<feature type="chain" id="PRO_0000243015" description="Large ribosomal subunit protein uL5">
    <location>
        <begin position="1"/>
        <end position="186"/>
    </location>
</feature>
<organism>
    <name type="scientific">Legionella pneumophila subsp. pneumophila (strain Philadelphia 1 / ATCC 33152 / DSM 7513)</name>
    <dbReference type="NCBI Taxonomy" id="272624"/>
    <lineage>
        <taxon>Bacteria</taxon>
        <taxon>Pseudomonadati</taxon>
        <taxon>Pseudomonadota</taxon>
        <taxon>Gammaproteobacteria</taxon>
        <taxon>Legionellales</taxon>
        <taxon>Legionellaceae</taxon>
        <taxon>Legionella</taxon>
    </lineage>
</organism>
<gene>
    <name evidence="1" type="primary">rplE</name>
    <name type="ordered locus">lpg0341</name>
</gene>
<sequence length="186" mass="21312">MIEMARLKEFYKKDVVTMMMKRFNYSSVMEVPRILKITLNMGVGEAVGDKKVMNHAIEDMTLISGQKPVVTKARKSIAGFKIREGWPIGCKVTLRRERMYEFLDRLISITLPRVRDFRGLNPKSFDGTGNYSMGIHEQIVFPEIDYDKTDGIRGLDICITTSAKTNEEAKALLEAFNLPLKDKDRK</sequence>
<reference key="1">
    <citation type="journal article" date="2004" name="Science">
        <title>The genomic sequence of the accidental pathogen Legionella pneumophila.</title>
        <authorList>
            <person name="Chien M."/>
            <person name="Morozova I."/>
            <person name="Shi S."/>
            <person name="Sheng H."/>
            <person name="Chen J."/>
            <person name="Gomez S.M."/>
            <person name="Asamani G."/>
            <person name="Hill K."/>
            <person name="Nuara J."/>
            <person name="Feder M."/>
            <person name="Rineer J."/>
            <person name="Greenberg J.J."/>
            <person name="Steshenko V."/>
            <person name="Park S.H."/>
            <person name="Zhao B."/>
            <person name="Teplitskaya E."/>
            <person name="Edwards J.R."/>
            <person name="Pampou S."/>
            <person name="Georghiou A."/>
            <person name="Chou I.-C."/>
            <person name="Iannuccilli W."/>
            <person name="Ulz M.E."/>
            <person name="Kim D.H."/>
            <person name="Geringer-Sameth A."/>
            <person name="Goldsberry C."/>
            <person name="Morozov P."/>
            <person name="Fischer S.G."/>
            <person name="Segal G."/>
            <person name="Qu X."/>
            <person name="Rzhetsky A."/>
            <person name="Zhang P."/>
            <person name="Cayanis E."/>
            <person name="De Jong P.J."/>
            <person name="Ju J."/>
            <person name="Kalachikov S."/>
            <person name="Shuman H.A."/>
            <person name="Russo J.J."/>
        </authorList>
    </citation>
    <scope>NUCLEOTIDE SEQUENCE [LARGE SCALE GENOMIC DNA]</scope>
    <source>
        <strain>Philadelphia 1 / ATCC 33152 / DSM 7513</strain>
    </source>
</reference>